<accession>Q3U095</accession>
<accession>B2RU41</accession>
<accession>Q8BM95</accession>
<accession>Q9CX72</accession>
<proteinExistence type="evidence at transcript level"/>
<evidence type="ECO:0000255" key="1"/>
<evidence type="ECO:0000305" key="2"/>
<protein>
    <recommendedName>
        <fullName>NXPE family member 2</fullName>
    </recommendedName>
    <alternativeName>
        <fullName>Protein FAM55B</fullName>
    </alternativeName>
</protein>
<sequence length="558" mass="63966">MRRMLSPRILLSSLPNASARKLFLIVLIIFVFWVVFMTSKDHTEFMVHLNNRIILRRWSIFKEFLHSEELKNTPASVEAELAVTAILEKLNQQIPPRPFQTHSSTTSAKQSTATIHNPQRTYCVGDQLNVLLVAKDYFGNRKEYGGDFLRARIFSPAMKAGTSGKVTDFNNGTYLVSFTLFWEGPVSLSILLMHPSEGVSALWRARNRGYGKIIFTGQFLNGTSPVLTECGLTLNTSAELCQYLDARDHEAFYCLKLPGVPCEALTHMTSKNSNISYLSLEEKLLFRRFNIGVEVVKNLSIVVSLCNNKTNKKKKKCQIGMETPSPGGYTLKGRWITAHCEQNEFRAIKDINNCLTRKLIYLMGDSTLRQWIYYLPKVVKTLKYFDRHGAGPFKTHILLDTERHIFVQWKKHSHPFVTNKLFSMKDDNYIPREIDQVAGDSGTAIVISFGQHFRPFPINVFIRRAINVKNAIERLFLRSPETKVIIKTENIREINEHVEIFSDFHGSIQNLIIRDIFRDLNVGIIDAWDMTVAYRSEDVHPPESVIESQIGMFLNYIC</sequence>
<name>NXPE2_MOUSE</name>
<keyword id="KW-0472">Membrane</keyword>
<keyword id="KW-1185">Reference proteome</keyword>
<keyword id="KW-0812">Transmembrane</keyword>
<keyword id="KW-1133">Transmembrane helix</keyword>
<feature type="chain" id="PRO_0000403788" description="NXPE family member 2">
    <location>
        <begin position="1"/>
        <end position="558"/>
    </location>
</feature>
<feature type="transmembrane region" description="Helical" evidence="1">
    <location>
        <begin position="17"/>
        <end position="37"/>
    </location>
</feature>
<feature type="sequence conflict" description="In Ref. 1; BAC28418/BAB31740." evidence="2" ref="1">
    <original>R</original>
    <variation>Q</variation>
    <location>
        <position position="20"/>
    </location>
</feature>
<feature type="sequence conflict" description="In Ref. 1; BAC28418/BAB31740." evidence="2" ref="1">
    <original>V</original>
    <variation>A</variation>
    <location>
        <position position="31"/>
    </location>
</feature>
<feature type="sequence conflict" description="In Ref. 1; BAC28418/BAB31740." evidence="2" ref="1">
    <original>IFSPAMKAGT</original>
    <variation>MSSPALKAGA</variation>
    <location>
        <begin position="153"/>
        <end position="162"/>
    </location>
</feature>
<feature type="sequence conflict" description="In Ref. 1; BAC28418/BAB31740." evidence="2" ref="1">
    <original>V</original>
    <variation>I</variation>
    <location>
        <position position="176"/>
    </location>
</feature>
<feature type="sequence conflict" description="In Ref. 3; AAI40956." evidence="2" ref="3">
    <original>M</original>
    <variation>I</variation>
    <location>
        <position position="193"/>
    </location>
</feature>
<feature type="sequence conflict" description="In Ref. 1; BAB31740." evidence="2" ref="1">
    <original>G</original>
    <variation>A</variation>
    <location>
        <position position="217"/>
    </location>
</feature>
<feature type="sequence conflict" description="In Ref. 1; BAC28418/BAB31740." evidence="2" ref="1">
    <original>L</original>
    <variation>P</variation>
    <location>
        <position position="305"/>
    </location>
</feature>
<feature type="sequence conflict" description="In Ref. 1; BAC28418/BAB31740." evidence="2" ref="1">
    <original>Y</original>
    <variation>F</variation>
    <location>
        <position position="384"/>
    </location>
</feature>
<organism>
    <name type="scientific">Mus musculus</name>
    <name type="common">Mouse</name>
    <dbReference type="NCBI Taxonomy" id="10090"/>
    <lineage>
        <taxon>Eukaryota</taxon>
        <taxon>Metazoa</taxon>
        <taxon>Chordata</taxon>
        <taxon>Craniata</taxon>
        <taxon>Vertebrata</taxon>
        <taxon>Euteleostomi</taxon>
        <taxon>Mammalia</taxon>
        <taxon>Eutheria</taxon>
        <taxon>Euarchontoglires</taxon>
        <taxon>Glires</taxon>
        <taxon>Rodentia</taxon>
        <taxon>Myomorpha</taxon>
        <taxon>Muroidea</taxon>
        <taxon>Muridae</taxon>
        <taxon>Murinae</taxon>
        <taxon>Mus</taxon>
        <taxon>Mus</taxon>
    </lineage>
</organism>
<gene>
    <name type="primary">Nxpe2</name>
    <name type="synonym">Fam55b</name>
</gene>
<dbReference type="EMBL" id="AK019469">
    <property type="protein sequence ID" value="BAB31740.1"/>
    <property type="molecule type" value="mRNA"/>
</dbReference>
<dbReference type="EMBL" id="AK033667">
    <property type="protein sequence ID" value="BAC28418.1"/>
    <property type="molecule type" value="mRNA"/>
</dbReference>
<dbReference type="EMBL" id="AK157096">
    <property type="protein sequence ID" value="BAE33960.1"/>
    <property type="molecule type" value="mRNA"/>
</dbReference>
<dbReference type="EMBL" id="CH466522">
    <property type="protein sequence ID" value="EDL25700.1"/>
    <property type="molecule type" value="Genomic_DNA"/>
</dbReference>
<dbReference type="EMBL" id="BC140955">
    <property type="protein sequence ID" value="AAI40956.1"/>
    <property type="molecule type" value="mRNA"/>
</dbReference>
<dbReference type="CCDS" id="CCDS23151.1"/>
<dbReference type="RefSeq" id="NP_084345.2">
    <property type="nucleotide sequence ID" value="NM_030069.3"/>
</dbReference>
<dbReference type="BioGRID" id="219283">
    <property type="interactions" value="2"/>
</dbReference>
<dbReference type="FunCoup" id="Q3U095">
    <property type="interactions" value="4"/>
</dbReference>
<dbReference type="STRING" id="10090.ENSMUSP00000034527"/>
<dbReference type="PhosphoSitePlus" id="Q3U095"/>
<dbReference type="jPOST" id="Q3U095"/>
<dbReference type="PaxDb" id="10090-ENSMUSP00000034527"/>
<dbReference type="PeptideAtlas" id="Q3U095"/>
<dbReference type="ProteomicsDB" id="293792"/>
<dbReference type="DNASU" id="78252"/>
<dbReference type="GeneID" id="78252"/>
<dbReference type="KEGG" id="mmu:78252"/>
<dbReference type="UCSC" id="uc009phw.2">
    <property type="organism name" value="mouse"/>
</dbReference>
<dbReference type="AGR" id="MGI:1925502"/>
<dbReference type="CTD" id="120406"/>
<dbReference type="MGI" id="MGI:1925502">
    <property type="gene designation" value="Nxpe2"/>
</dbReference>
<dbReference type="eggNOG" id="ENOG502QW5F">
    <property type="taxonomic scope" value="Eukaryota"/>
</dbReference>
<dbReference type="InParanoid" id="Q3U095"/>
<dbReference type="OrthoDB" id="2112051at2759"/>
<dbReference type="PhylomeDB" id="Q3U095"/>
<dbReference type="TreeFam" id="TF329555"/>
<dbReference type="BioGRID-ORCS" id="78252">
    <property type="hits" value="2 hits in 76 CRISPR screens"/>
</dbReference>
<dbReference type="PRO" id="PR:Q3U095"/>
<dbReference type="Proteomes" id="UP000000589">
    <property type="component" value="Unplaced"/>
</dbReference>
<dbReference type="RNAct" id="Q3U095">
    <property type="molecule type" value="protein"/>
</dbReference>
<dbReference type="GO" id="GO:0016020">
    <property type="term" value="C:membrane"/>
    <property type="evidence" value="ECO:0007669"/>
    <property type="project" value="UniProtKB-SubCell"/>
</dbReference>
<dbReference type="Gene3D" id="2.60.40.10">
    <property type="entry name" value="Immunoglobulins"/>
    <property type="match status" value="1"/>
</dbReference>
<dbReference type="InterPro" id="IPR013783">
    <property type="entry name" value="Ig-like_fold"/>
</dbReference>
<dbReference type="InterPro" id="IPR014756">
    <property type="entry name" value="Ig_E-set"/>
</dbReference>
<dbReference type="InterPro" id="IPR057106">
    <property type="entry name" value="NXPE4_C"/>
</dbReference>
<dbReference type="InterPro" id="IPR026845">
    <property type="entry name" value="NXPH/NXPE"/>
</dbReference>
<dbReference type="PANTHER" id="PTHR16165">
    <property type="entry name" value="NXPE FAMILY MEMBER"/>
    <property type="match status" value="1"/>
</dbReference>
<dbReference type="PANTHER" id="PTHR16165:SF10">
    <property type="entry name" value="NXPE FAMILY MEMBER 2"/>
    <property type="match status" value="1"/>
</dbReference>
<dbReference type="Pfam" id="PF06312">
    <property type="entry name" value="Neurexophilin"/>
    <property type="match status" value="1"/>
</dbReference>
<dbReference type="Pfam" id="PF24536">
    <property type="entry name" value="NXPE4_C"/>
    <property type="match status" value="1"/>
</dbReference>
<dbReference type="SUPFAM" id="SSF81296">
    <property type="entry name" value="E set domains"/>
    <property type="match status" value="1"/>
</dbReference>
<reference key="1">
    <citation type="journal article" date="2005" name="Science">
        <title>The transcriptional landscape of the mammalian genome.</title>
        <authorList>
            <person name="Carninci P."/>
            <person name="Kasukawa T."/>
            <person name="Katayama S."/>
            <person name="Gough J."/>
            <person name="Frith M.C."/>
            <person name="Maeda N."/>
            <person name="Oyama R."/>
            <person name="Ravasi T."/>
            <person name="Lenhard B."/>
            <person name="Wells C."/>
            <person name="Kodzius R."/>
            <person name="Shimokawa K."/>
            <person name="Bajic V.B."/>
            <person name="Brenner S.E."/>
            <person name="Batalov S."/>
            <person name="Forrest A.R."/>
            <person name="Zavolan M."/>
            <person name="Davis M.J."/>
            <person name="Wilming L.G."/>
            <person name="Aidinis V."/>
            <person name="Allen J.E."/>
            <person name="Ambesi-Impiombato A."/>
            <person name="Apweiler R."/>
            <person name="Aturaliya R.N."/>
            <person name="Bailey T.L."/>
            <person name="Bansal M."/>
            <person name="Baxter L."/>
            <person name="Beisel K.W."/>
            <person name="Bersano T."/>
            <person name="Bono H."/>
            <person name="Chalk A.M."/>
            <person name="Chiu K.P."/>
            <person name="Choudhary V."/>
            <person name="Christoffels A."/>
            <person name="Clutterbuck D.R."/>
            <person name="Crowe M.L."/>
            <person name="Dalla E."/>
            <person name="Dalrymple B.P."/>
            <person name="de Bono B."/>
            <person name="Della Gatta G."/>
            <person name="di Bernardo D."/>
            <person name="Down T."/>
            <person name="Engstrom P."/>
            <person name="Fagiolini M."/>
            <person name="Faulkner G."/>
            <person name="Fletcher C.F."/>
            <person name="Fukushima T."/>
            <person name="Furuno M."/>
            <person name="Futaki S."/>
            <person name="Gariboldi M."/>
            <person name="Georgii-Hemming P."/>
            <person name="Gingeras T.R."/>
            <person name="Gojobori T."/>
            <person name="Green R.E."/>
            <person name="Gustincich S."/>
            <person name="Harbers M."/>
            <person name="Hayashi Y."/>
            <person name="Hensch T.K."/>
            <person name="Hirokawa N."/>
            <person name="Hill D."/>
            <person name="Huminiecki L."/>
            <person name="Iacono M."/>
            <person name="Ikeo K."/>
            <person name="Iwama A."/>
            <person name="Ishikawa T."/>
            <person name="Jakt M."/>
            <person name="Kanapin A."/>
            <person name="Katoh M."/>
            <person name="Kawasawa Y."/>
            <person name="Kelso J."/>
            <person name="Kitamura H."/>
            <person name="Kitano H."/>
            <person name="Kollias G."/>
            <person name="Krishnan S.P."/>
            <person name="Kruger A."/>
            <person name="Kummerfeld S.K."/>
            <person name="Kurochkin I.V."/>
            <person name="Lareau L.F."/>
            <person name="Lazarevic D."/>
            <person name="Lipovich L."/>
            <person name="Liu J."/>
            <person name="Liuni S."/>
            <person name="McWilliam S."/>
            <person name="Madan Babu M."/>
            <person name="Madera M."/>
            <person name="Marchionni L."/>
            <person name="Matsuda H."/>
            <person name="Matsuzawa S."/>
            <person name="Miki H."/>
            <person name="Mignone F."/>
            <person name="Miyake S."/>
            <person name="Morris K."/>
            <person name="Mottagui-Tabar S."/>
            <person name="Mulder N."/>
            <person name="Nakano N."/>
            <person name="Nakauchi H."/>
            <person name="Ng P."/>
            <person name="Nilsson R."/>
            <person name="Nishiguchi S."/>
            <person name="Nishikawa S."/>
            <person name="Nori F."/>
            <person name="Ohara O."/>
            <person name="Okazaki Y."/>
            <person name="Orlando V."/>
            <person name="Pang K.C."/>
            <person name="Pavan W.J."/>
            <person name="Pavesi G."/>
            <person name="Pesole G."/>
            <person name="Petrovsky N."/>
            <person name="Piazza S."/>
            <person name="Reed J."/>
            <person name="Reid J.F."/>
            <person name="Ring B.Z."/>
            <person name="Ringwald M."/>
            <person name="Rost B."/>
            <person name="Ruan Y."/>
            <person name="Salzberg S.L."/>
            <person name="Sandelin A."/>
            <person name="Schneider C."/>
            <person name="Schoenbach C."/>
            <person name="Sekiguchi K."/>
            <person name="Semple C.A."/>
            <person name="Seno S."/>
            <person name="Sessa L."/>
            <person name="Sheng Y."/>
            <person name="Shibata Y."/>
            <person name="Shimada H."/>
            <person name="Shimada K."/>
            <person name="Silva D."/>
            <person name="Sinclair B."/>
            <person name="Sperling S."/>
            <person name="Stupka E."/>
            <person name="Sugiura K."/>
            <person name="Sultana R."/>
            <person name="Takenaka Y."/>
            <person name="Taki K."/>
            <person name="Tammoja K."/>
            <person name="Tan S.L."/>
            <person name="Tang S."/>
            <person name="Taylor M.S."/>
            <person name="Tegner J."/>
            <person name="Teichmann S.A."/>
            <person name="Ueda H.R."/>
            <person name="van Nimwegen E."/>
            <person name="Verardo R."/>
            <person name="Wei C.L."/>
            <person name="Yagi K."/>
            <person name="Yamanishi H."/>
            <person name="Zabarovsky E."/>
            <person name="Zhu S."/>
            <person name="Zimmer A."/>
            <person name="Hide W."/>
            <person name="Bult C."/>
            <person name="Grimmond S.M."/>
            <person name="Teasdale R.D."/>
            <person name="Liu E.T."/>
            <person name="Brusic V."/>
            <person name="Quackenbush J."/>
            <person name="Wahlestedt C."/>
            <person name="Mattick J.S."/>
            <person name="Hume D.A."/>
            <person name="Kai C."/>
            <person name="Sasaki D."/>
            <person name="Tomaru Y."/>
            <person name="Fukuda S."/>
            <person name="Kanamori-Katayama M."/>
            <person name="Suzuki M."/>
            <person name="Aoki J."/>
            <person name="Arakawa T."/>
            <person name="Iida J."/>
            <person name="Imamura K."/>
            <person name="Itoh M."/>
            <person name="Kato T."/>
            <person name="Kawaji H."/>
            <person name="Kawagashira N."/>
            <person name="Kawashima T."/>
            <person name="Kojima M."/>
            <person name="Kondo S."/>
            <person name="Konno H."/>
            <person name="Nakano K."/>
            <person name="Ninomiya N."/>
            <person name="Nishio T."/>
            <person name="Okada M."/>
            <person name="Plessy C."/>
            <person name="Shibata K."/>
            <person name="Shiraki T."/>
            <person name="Suzuki S."/>
            <person name="Tagami M."/>
            <person name="Waki K."/>
            <person name="Watahiki A."/>
            <person name="Okamura-Oho Y."/>
            <person name="Suzuki H."/>
            <person name="Kawai J."/>
            <person name="Hayashizaki Y."/>
        </authorList>
    </citation>
    <scope>NUCLEOTIDE SEQUENCE [LARGE SCALE MRNA]</scope>
    <source>
        <strain>C57BL/6J</strain>
        <tissue>Cecum</tissue>
        <tissue>Liver</tissue>
    </source>
</reference>
<reference key="2">
    <citation type="submission" date="2005-07" db="EMBL/GenBank/DDBJ databases">
        <authorList>
            <person name="Mural R.J."/>
            <person name="Adams M.D."/>
            <person name="Myers E.W."/>
            <person name="Smith H.O."/>
            <person name="Venter J.C."/>
        </authorList>
    </citation>
    <scope>NUCLEOTIDE SEQUENCE [LARGE SCALE GENOMIC DNA]</scope>
</reference>
<reference key="3">
    <citation type="journal article" date="2004" name="Genome Res.">
        <title>The status, quality, and expansion of the NIH full-length cDNA project: the Mammalian Gene Collection (MGC).</title>
        <authorList>
            <consortium name="The MGC Project Team"/>
        </authorList>
    </citation>
    <scope>NUCLEOTIDE SEQUENCE [LARGE SCALE MRNA]</scope>
    <source>
        <tissue>Brain</tissue>
    </source>
</reference>
<comment type="subcellular location">
    <subcellularLocation>
        <location evidence="2">Membrane</location>
        <topology evidence="2">Single-pass membrane protein</topology>
    </subcellularLocation>
</comment>
<comment type="similarity">
    <text evidence="2">Belongs to the NXPE family.</text>
</comment>